<comment type="subcellular location">
    <subcellularLocation>
        <location evidence="1">Cytoplasm</location>
    </subcellularLocation>
</comment>
<comment type="similarity">
    <text evidence="1">Belongs to the TACO1 family.</text>
</comment>
<name>Y510_AZOC5</name>
<keyword id="KW-0963">Cytoplasm</keyword>
<keyword id="KW-0238">DNA-binding</keyword>
<keyword id="KW-1185">Reference proteome</keyword>
<keyword id="KW-0804">Transcription</keyword>
<keyword id="KW-0805">Transcription regulation</keyword>
<dbReference type="EMBL" id="AP009384">
    <property type="protein sequence ID" value="BAF86508.1"/>
    <property type="molecule type" value="Genomic_DNA"/>
</dbReference>
<dbReference type="RefSeq" id="WP_012169041.1">
    <property type="nucleotide sequence ID" value="NC_009937.1"/>
</dbReference>
<dbReference type="SMR" id="A8IM90"/>
<dbReference type="STRING" id="438753.AZC_0510"/>
<dbReference type="KEGG" id="azc:AZC_0510"/>
<dbReference type="eggNOG" id="COG0217">
    <property type="taxonomic scope" value="Bacteria"/>
</dbReference>
<dbReference type="HOGENOM" id="CLU_062974_2_2_5"/>
<dbReference type="Proteomes" id="UP000000270">
    <property type="component" value="Chromosome"/>
</dbReference>
<dbReference type="GO" id="GO:0005829">
    <property type="term" value="C:cytosol"/>
    <property type="evidence" value="ECO:0007669"/>
    <property type="project" value="TreeGrafter"/>
</dbReference>
<dbReference type="GO" id="GO:0003677">
    <property type="term" value="F:DNA binding"/>
    <property type="evidence" value="ECO:0007669"/>
    <property type="project" value="UniProtKB-UniRule"/>
</dbReference>
<dbReference type="GO" id="GO:0006355">
    <property type="term" value="P:regulation of DNA-templated transcription"/>
    <property type="evidence" value="ECO:0007669"/>
    <property type="project" value="UniProtKB-UniRule"/>
</dbReference>
<dbReference type="FunFam" id="1.10.10.200:FF:000002">
    <property type="entry name" value="Probable transcriptional regulatory protein CLM62_37755"/>
    <property type="match status" value="1"/>
</dbReference>
<dbReference type="Gene3D" id="1.10.10.200">
    <property type="match status" value="1"/>
</dbReference>
<dbReference type="Gene3D" id="3.30.70.980">
    <property type="match status" value="2"/>
</dbReference>
<dbReference type="HAMAP" id="MF_00693">
    <property type="entry name" value="Transcrip_reg_TACO1"/>
    <property type="match status" value="1"/>
</dbReference>
<dbReference type="InterPro" id="IPR017856">
    <property type="entry name" value="Integrase-like_N"/>
</dbReference>
<dbReference type="InterPro" id="IPR048300">
    <property type="entry name" value="TACO1_YebC-like_2nd/3rd_dom"/>
</dbReference>
<dbReference type="InterPro" id="IPR049083">
    <property type="entry name" value="TACO1_YebC_N"/>
</dbReference>
<dbReference type="InterPro" id="IPR002876">
    <property type="entry name" value="Transcrip_reg_TACO1-like"/>
</dbReference>
<dbReference type="InterPro" id="IPR026564">
    <property type="entry name" value="Transcrip_reg_TACO1-like_dom3"/>
</dbReference>
<dbReference type="InterPro" id="IPR029072">
    <property type="entry name" value="YebC-like"/>
</dbReference>
<dbReference type="NCBIfam" id="NF001030">
    <property type="entry name" value="PRK00110.1"/>
    <property type="match status" value="1"/>
</dbReference>
<dbReference type="NCBIfam" id="NF009044">
    <property type="entry name" value="PRK12378.1"/>
    <property type="match status" value="1"/>
</dbReference>
<dbReference type="NCBIfam" id="TIGR01033">
    <property type="entry name" value="YebC/PmpR family DNA-binding transcriptional regulator"/>
    <property type="match status" value="1"/>
</dbReference>
<dbReference type="PANTHER" id="PTHR12532:SF6">
    <property type="entry name" value="TRANSCRIPTIONAL REGULATORY PROTEIN YEBC-RELATED"/>
    <property type="match status" value="1"/>
</dbReference>
<dbReference type="PANTHER" id="PTHR12532">
    <property type="entry name" value="TRANSLATIONAL ACTIVATOR OF CYTOCHROME C OXIDASE 1"/>
    <property type="match status" value="1"/>
</dbReference>
<dbReference type="Pfam" id="PF20772">
    <property type="entry name" value="TACO1_YebC_N"/>
    <property type="match status" value="1"/>
</dbReference>
<dbReference type="Pfam" id="PF01709">
    <property type="entry name" value="Transcrip_reg"/>
    <property type="match status" value="1"/>
</dbReference>
<dbReference type="SUPFAM" id="SSF75625">
    <property type="entry name" value="YebC-like"/>
    <property type="match status" value="1"/>
</dbReference>
<reference key="1">
    <citation type="submission" date="2007-04" db="EMBL/GenBank/DDBJ databases">
        <title>Complete genome sequence of the nitrogen-fixing bacterium Azorhizobium caulinodans ORS571.</title>
        <authorList>
            <person name="Lee K.B."/>
            <person name="Backer P.D."/>
            <person name="Aono T."/>
            <person name="Liu C.T."/>
            <person name="Suzuki S."/>
            <person name="Suzuki T."/>
            <person name="Kaneko T."/>
            <person name="Yamada M."/>
            <person name="Tabata S."/>
            <person name="Kupfer D.M."/>
            <person name="Najar F.Z."/>
            <person name="Wiley G.B."/>
            <person name="Roe B."/>
            <person name="Binnewies T."/>
            <person name="Ussery D."/>
            <person name="Vereecke D."/>
            <person name="Gevers D."/>
            <person name="Holsters M."/>
            <person name="Oyaizu H."/>
        </authorList>
    </citation>
    <scope>NUCLEOTIDE SEQUENCE [LARGE SCALE GENOMIC DNA]</scope>
    <source>
        <strain>ATCC 43989 / DSM 5975 / JCM 20966 / LMG 6465 / NBRC 14845 / NCIMB 13405 / ORS 571</strain>
    </source>
</reference>
<evidence type="ECO:0000255" key="1">
    <source>
        <dbReference type="HAMAP-Rule" id="MF_00693"/>
    </source>
</evidence>
<proteinExistence type="inferred from homology"/>
<accession>A8IM90</accession>
<protein>
    <recommendedName>
        <fullName evidence="1">Probable transcriptional regulatory protein AZC_0510</fullName>
    </recommendedName>
</protein>
<gene>
    <name type="ordered locus">AZC_0510</name>
</gene>
<sequence>MAGHSQFKNIMHRKGRQDAVRSKLFSKLAREITVAAKMGLPDPNMNARLRAAILAARAENMPKDNIERAIKKASGADMENYDEIRYEGYGPGGVAVIVEALTDNRNRTASEVRSYFTKSGGNLAETGAVSFMFDRLGAIEFDAAKVNADDLLEAAIEAGADDVNSSEETHEVVCAVESLAEVQKALEAKFGEPRKAGLVWRPQNTIAVDDETGEKLMRLVETLEDNDDVQNVTANFELSEALMAKLSA</sequence>
<feature type="chain" id="PRO_1000072750" description="Probable transcriptional regulatory protein AZC_0510">
    <location>
        <begin position="1"/>
        <end position="248"/>
    </location>
</feature>
<organism>
    <name type="scientific">Azorhizobium caulinodans (strain ATCC 43989 / DSM 5975 / JCM 20966 / LMG 6465 / NBRC 14845 / NCIMB 13405 / ORS 571)</name>
    <dbReference type="NCBI Taxonomy" id="438753"/>
    <lineage>
        <taxon>Bacteria</taxon>
        <taxon>Pseudomonadati</taxon>
        <taxon>Pseudomonadota</taxon>
        <taxon>Alphaproteobacteria</taxon>
        <taxon>Hyphomicrobiales</taxon>
        <taxon>Xanthobacteraceae</taxon>
        <taxon>Azorhizobium</taxon>
    </lineage>
</organism>